<accession>P20629</accession>
<reference key="1">
    <citation type="journal article" date="1989" name="J. Bacteriol.">
        <title>Open reading frame 5 (ORF5), encoding a ferredoxinlike protein, and nifQ are cotranscribed with nifE, nifN, nifX, and ORF4 in Rhodobacter capsulatus.</title>
        <authorList>
            <person name="Moreno-Vivian C."/>
            <person name="Hennecke S."/>
            <person name="Puehler A."/>
            <person name="Klipp W."/>
        </authorList>
    </citation>
    <scope>NUCLEOTIDE SEQUENCE [GENOMIC DNA]</scope>
</reference>
<sequence length="180" mass="19521">MLHFPDPFATGPGPVIPAEALGFILAQGLRECAAGLGPLTARLGLSGADLAALRDRFAPGLELPDLDLPRPEAGPDQQAIETLILWRAGVATPEARWLAAILARRSMETRHLWEDLGLPSRPWLSGMIAHFLPGLAAANARNMRWKKFFYRQICSDAAFSLCLSPSCDDCDERAACFAPD</sequence>
<organism>
    <name type="scientific">Rhodobacter capsulatus</name>
    <name type="common">Rhodopseudomonas capsulata</name>
    <dbReference type="NCBI Taxonomy" id="1061"/>
    <lineage>
        <taxon>Bacteria</taxon>
        <taxon>Pseudomonadati</taxon>
        <taxon>Pseudomonadota</taxon>
        <taxon>Alphaproteobacteria</taxon>
        <taxon>Rhodobacterales</taxon>
        <taxon>Rhodobacter group</taxon>
        <taxon>Rhodobacter</taxon>
    </lineage>
</organism>
<protein>
    <recommendedName>
        <fullName>Protein NifQ</fullName>
    </recommendedName>
</protein>
<evidence type="ECO:0000305" key="1"/>
<proteinExistence type="inferred from homology"/>
<feature type="chain" id="PRO_0000096824" description="Protein NifQ">
    <location>
        <begin position="1"/>
        <end position="180"/>
    </location>
</feature>
<gene>
    <name type="primary">nifQ</name>
</gene>
<name>NIFQ_RHOCA</name>
<dbReference type="EMBL" id="M26323">
    <property type="protein sequence ID" value="AAA26147.1"/>
    <property type="molecule type" value="Genomic_DNA"/>
</dbReference>
<dbReference type="PIR" id="C32308">
    <property type="entry name" value="C32308"/>
</dbReference>
<dbReference type="RefSeq" id="WP_013068970.1">
    <property type="nucleotide sequence ID" value="NZ_VIBE01000016.1"/>
</dbReference>
<dbReference type="OMA" id="MVARRAM"/>
<dbReference type="GO" id="GO:0030151">
    <property type="term" value="F:molybdenum ion binding"/>
    <property type="evidence" value="ECO:0007669"/>
    <property type="project" value="InterPro"/>
</dbReference>
<dbReference type="GO" id="GO:0009399">
    <property type="term" value="P:nitrogen fixation"/>
    <property type="evidence" value="ECO:0007669"/>
    <property type="project" value="UniProtKB-KW"/>
</dbReference>
<dbReference type="InterPro" id="IPR006975">
    <property type="entry name" value="NifQ"/>
</dbReference>
<dbReference type="Pfam" id="PF04891">
    <property type="entry name" value="NifQ"/>
    <property type="match status" value="1"/>
</dbReference>
<comment type="function">
    <text>Probably involved in molybdenum processing.</text>
</comment>
<comment type="similarity">
    <text evidence="1">Belongs to the NifQ family.</text>
</comment>
<keyword id="KW-0500">Molybdenum</keyword>
<keyword id="KW-0535">Nitrogen fixation</keyword>